<dbReference type="EMBL" id="CP000478">
    <property type="protein sequence ID" value="ABK17242.1"/>
    <property type="molecule type" value="Genomic_DNA"/>
</dbReference>
<dbReference type="RefSeq" id="WP_011698412.1">
    <property type="nucleotide sequence ID" value="NC_008554.1"/>
</dbReference>
<dbReference type="SMR" id="A0LIJ0"/>
<dbReference type="FunCoup" id="A0LIJ0">
    <property type="interactions" value="684"/>
</dbReference>
<dbReference type="STRING" id="335543.Sfum_1555"/>
<dbReference type="KEGG" id="sfu:Sfum_1555"/>
<dbReference type="eggNOG" id="COG0087">
    <property type="taxonomic scope" value="Bacteria"/>
</dbReference>
<dbReference type="HOGENOM" id="CLU_044142_4_1_7"/>
<dbReference type="InParanoid" id="A0LIJ0"/>
<dbReference type="OrthoDB" id="9806135at2"/>
<dbReference type="Proteomes" id="UP000001784">
    <property type="component" value="Chromosome"/>
</dbReference>
<dbReference type="GO" id="GO:0022625">
    <property type="term" value="C:cytosolic large ribosomal subunit"/>
    <property type="evidence" value="ECO:0007669"/>
    <property type="project" value="TreeGrafter"/>
</dbReference>
<dbReference type="GO" id="GO:0019843">
    <property type="term" value="F:rRNA binding"/>
    <property type="evidence" value="ECO:0007669"/>
    <property type="project" value="UniProtKB-UniRule"/>
</dbReference>
<dbReference type="GO" id="GO:0003735">
    <property type="term" value="F:structural constituent of ribosome"/>
    <property type="evidence" value="ECO:0007669"/>
    <property type="project" value="InterPro"/>
</dbReference>
<dbReference type="GO" id="GO:0006412">
    <property type="term" value="P:translation"/>
    <property type="evidence" value="ECO:0007669"/>
    <property type="project" value="UniProtKB-UniRule"/>
</dbReference>
<dbReference type="FunFam" id="2.40.30.10:FF:000004">
    <property type="entry name" value="50S ribosomal protein L3"/>
    <property type="match status" value="1"/>
</dbReference>
<dbReference type="FunFam" id="3.30.160.810:FF:000001">
    <property type="entry name" value="50S ribosomal protein L3"/>
    <property type="match status" value="1"/>
</dbReference>
<dbReference type="Gene3D" id="3.30.160.810">
    <property type="match status" value="1"/>
</dbReference>
<dbReference type="Gene3D" id="2.40.30.10">
    <property type="entry name" value="Translation factors"/>
    <property type="match status" value="1"/>
</dbReference>
<dbReference type="HAMAP" id="MF_01325_B">
    <property type="entry name" value="Ribosomal_uL3_B"/>
    <property type="match status" value="1"/>
</dbReference>
<dbReference type="InterPro" id="IPR000597">
    <property type="entry name" value="Ribosomal_uL3"/>
</dbReference>
<dbReference type="InterPro" id="IPR019927">
    <property type="entry name" value="Ribosomal_uL3_bac/org-type"/>
</dbReference>
<dbReference type="InterPro" id="IPR019926">
    <property type="entry name" value="Ribosomal_uL3_CS"/>
</dbReference>
<dbReference type="InterPro" id="IPR009000">
    <property type="entry name" value="Transl_B-barrel_sf"/>
</dbReference>
<dbReference type="NCBIfam" id="TIGR03625">
    <property type="entry name" value="L3_bact"/>
    <property type="match status" value="1"/>
</dbReference>
<dbReference type="PANTHER" id="PTHR11229">
    <property type="entry name" value="50S RIBOSOMAL PROTEIN L3"/>
    <property type="match status" value="1"/>
</dbReference>
<dbReference type="PANTHER" id="PTHR11229:SF16">
    <property type="entry name" value="LARGE RIBOSOMAL SUBUNIT PROTEIN UL3C"/>
    <property type="match status" value="1"/>
</dbReference>
<dbReference type="Pfam" id="PF00297">
    <property type="entry name" value="Ribosomal_L3"/>
    <property type="match status" value="1"/>
</dbReference>
<dbReference type="SUPFAM" id="SSF50447">
    <property type="entry name" value="Translation proteins"/>
    <property type="match status" value="1"/>
</dbReference>
<dbReference type="PROSITE" id="PS00474">
    <property type="entry name" value="RIBOSOMAL_L3"/>
    <property type="match status" value="1"/>
</dbReference>
<organism>
    <name type="scientific">Syntrophobacter fumaroxidans (strain DSM 10017 / MPOB)</name>
    <dbReference type="NCBI Taxonomy" id="335543"/>
    <lineage>
        <taxon>Bacteria</taxon>
        <taxon>Pseudomonadati</taxon>
        <taxon>Thermodesulfobacteriota</taxon>
        <taxon>Syntrophobacteria</taxon>
        <taxon>Syntrophobacterales</taxon>
        <taxon>Syntrophobacteraceae</taxon>
        <taxon>Syntrophobacter</taxon>
    </lineage>
</organism>
<gene>
    <name evidence="1" type="primary">rplC</name>
    <name type="ordered locus">Sfum_1555</name>
</gene>
<proteinExistence type="inferred from homology"/>
<feature type="chain" id="PRO_1000067571" description="Large ribosomal subunit protein uL3">
    <location>
        <begin position="1"/>
        <end position="210"/>
    </location>
</feature>
<feature type="region of interest" description="Disordered" evidence="2">
    <location>
        <begin position="126"/>
        <end position="167"/>
    </location>
</feature>
<feature type="compositionally biased region" description="Basic residues" evidence="2">
    <location>
        <begin position="156"/>
        <end position="167"/>
    </location>
</feature>
<protein>
    <recommendedName>
        <fullName evidence="1">Large ribosomal subunit protein uL3</fullName>
    </recommendedName>
    <alternativeName>
        <fullName evidence="3">50S ribosomal protein L3</fullName>
    </alternativeName>
</protein>
<comment type="function">
    <text evidence="1">One of the primary rRNA binding proteins, it binds directly near the 3'-end of the 23S rRNA, where it nucleates assembly of the 50S subunit.</text>
</comment>
<comment type="subunit">
    <text evidence="1">Part of the 50S ribosomal subunit. Forms a cluster with proteins L14 and L19.</text>
</comment>
<comment type="similarity">
    <text evidence="1">Belongs to the universal ribosomal protein uL3 family.</text>
</comment>
<accession>A0LIJ0</accession>
<name>RL3_SYNFM</name>
<sequence length="210" mass="22833">MIKAIVGRKLQMSQIFAEDGTAVPITLIQAGPCTVTQVKTPERDGYSALQIGFGSRKPKNVNKPMKGHLDKVGKGYFEVLREIRMENASDHEVGEDLAADVFEIGERIDVIGTTKGKGYAGTIKRWGFQRGPSGHGSKNIREPGSTGNATFPGRVIKGKKMPGQKGNKRTTVMNLRIIDVRPEENLLIVKGAVPGSQNGIVLIRKTNRAK</sequence>
<evidence type="ECO:0000255" key="1">
    <source>
        <dbReference type="HAMAP-Rule" id="MF_01325"/>
    </source>
</evidence>
<evidence type="ECO:0000256" key="2">
    <source>
        <dbReference type="SAM" id="MobiDB-lite"/>
    </source>
</evidence>
<evidence type="ECO:0000305" key="3"/>
<keyword id="KW-1185">Reference proteome</keyword>
<keyword id="KW-0687">Ribonucleoprotein</keyword>
<keyword id="KW-0689">Ribosomal protein</keyword>
<keyword id="KW-0694">RNA-binding</keyword>
<keyword id="KW-0699">rRNA-binding</keyword>
<reference key="1">
    <citation type="submission" date="2006-10" db="EMBL/GenBank/DDBJ databases">
        <title>Complete sequence of Syntrophobacter fumaroxidans MPOB.</title>
        <authorList>
            <consortium name="US DOE Joint Genome Institute"/>
            <person name="Copeland A."/>
            <person name="Lucas S."/>
            <person name="Lapidus A."/>
            <person name="Barry K."/>
            <person name="Detter J.C."/>
            <person name="Glavina del Rio T."/>
            <person name="Hammon N."/>
            <person name="Israni S."/>
            <person name="Pitluck S."/>
            <person name="Goltsman E.G."/>
            <person name="Martinez M."/>
            <person name="Schmutz J."/>
            <person name="Larimer F."/>
            <person name="Land M."/>
            <person name="Hauser L."/>
            <person name="Kyrpides N."/>
            <person name="Kim E."/>
            <person name="Boone D.R."/>
            <person name="Brockman F."/>
            <person name="Culley D."/>
            <person name="Ferry J."/>
            <person name="Gunsalus R."/>
            <person name="McInerney M.J."/>
            <person name="Morrison M."/>
            <person name="Plugge C."/>
            <person name="Rohlin L."/>
            <person name="Scholten J."/>
            <person name="Sieber J."/>
            <person name="Stams A.J.M."/>
            <person name="Worm P."/>
            <person name="Henstra A.M."/>
            <person name="Richardson P."/>
        </authorList>
    </citation>
    <scope>NUCLEOTIDE SEQUENCE [LARGE SCALE GENOMIC DNA]</scope>
    <source>
        <strain>DSM 10017 / MPOB</strain>
    </source>
</reference>